<name>PDXS_BACC7</name>
<gene>
    <name evidence="1" type="primary">pdxS</name>
    <name type="ordered locus">BCAH187_A0016</name>
</gene>
<dbReference type="EC" id="4.3.3.6" evidence="1"/>
<dbReference type="EMBL" id="CP001177">
    <property type="protein sequence ID" value="ACJ80421.1"/>
    <property type="molecule type" value="Genomic_DNA"/>
</dbReference>
<dbReference type="SMR" id="B7HPS6"/>
<dbReference type="KEGG" id="bcr:BCAH187_A0016"/>
<dbReference type="HOGENOM" id="CLU_055352_1_0_9"/>
<dbReference type="UniPathway" id="UPA00245"/>
<dbReference type="Proteomes" id="UP000002214">
    <property type="component" value="Chromosome"/>
</dbReference>
<dbReference type="GO" id="GO:0036381">
    <property type="term" value="F:pyridoxal 5'-phosphate synthase (glutamine hydrolysing) activity"/>
    <property type="evidence" value="ECO:0007669"/>
    <property type="project" value="UniProtKB-UniRule"/>
</dbReference>
<dbReference type="GO" id="GO:0006520">
    <property type="term" value="P:amino acid metabolic process"/>
    <property type="evidence" value="ECO:0007669"/>
    <property type="project" value="TreeGrafter"/>
</dbReference>
<dbReference type="GO" id="GO:0042823">
    <property type="term" value="P:pyridoxal phosphate biosynthetic process"/>
    <property type="evidence" value="ECO:0007669"/>
    <property type="project" value="UniProtKB-UniRule"/>
</dbReference>
<dbReference type="GO" id="GO:0008615">
    <property type="term" value="P:pyridoxine biosynthetic process"/>
    <property type="evidence" value="ECO:0007669"/>
    <property type="project" value="TreeGrafter"/>
</dbReference>
<dbReference type="CDD" id="cd04727">
    <property type="entry name" value="pdxS"/>
    <property type="match status" value="1"/>
</dbReference>
<dbReference type="FunFam" id="3.20.20.70:FF:000001">
    <property type="entry name" value="Pyridoxine biosynthesis protein PDX1"/>
    <property type="match status" value="1"/>
</dbReference>
<dbReference type="Gene3D" id="3.20.20.70">
    <property type="entry name" value="Aldolase class I"/>
    <property type="match status" value="1"/>
</dbReference>
<dbReference type="HAMAP" id="MF_01824">
    <property type="entry name" value="PdxS"/>
    <property type="match status" value="1"/>
</dbReference>
<dbReference type="InterPro" id="IPR013785">
    <property type="entry name" value="Aldolase_TIM"/>
</dbReference>
<dbReference type="InterPro" id="IPR001852">
    <property type="entry name" value="PdxS/SNZ"/>
</dbReference>
<dbReference type="InterPro" id="IPR033755">
    <property type="entry name" value="PdxS/SNZ_N"/>
</dbReference>
<dbReference type="InterPro" id="IPR011060">
    <property type="entry name" value="RibuloseP-bd_barrel"/>
</dbReference>
<dbReference type="NCBIfam" id="NF003215">
    <property type="entry name" value="PRK04180.1"/>
    <property type="match status" value="1"/>
</dbReference>
<dbReference type="NCBIfam" id="TIGR00343">
    <property type="entry name" value="pyridoxal 5'-phosphate synthase lyase subunit PdxS"/>
    <property type="match status" value="1"/>
</dbReference>
<dbReference type="PANTHER" id="PTHR31829">
    <property type="entry name" value="PYRIDOXAL 5'-PHOSPHATE SYNTHASE SUBUNIT SNZ1-RELATED"/>
    <property type="match status" value="1"/>
</dbReference>
<dbReference type="PANTHER" id="PTHR31829:SF0">
    <property type="entry name" value="PYRIDOXAL 5'-PHOSPHATE SYNTHASE SUBUNIT SNZ1-RELATED"/>
    <property type="match status" value="1"/>
</dbReference>
<dbReference type="Pfam" id="PF01680">
    <property type="entry name" value="SOR_SNZ"/>
    <property type="match status" value="1"/>
</dbReference>
<dbReference type="PIRSF" id="PIRSF029271">
    <property type="entry name" value="Pdx1"/>
    <property type="match status" value="1"/>
</dbReference>
<dbReference type="SUPFAM" id="SSF51366">
    <property type="entry name" value="Ribulose-phoshate binding barrel"/>
    <property type="match status" value="1"/>
</dbReference>
<dbReference type="PROSITE" id="PS01235">
    <property type="entry name" value="PDXS_SNZ_1"/>
    <property type="match status" value="1"/>
</dbReference>
<dbReference type="PROSITE" id="PS51129">
    <property type="entry name" value="PDXS_SNZ_2"/>
    <property type="match status" value="1"/>
</dbReference>
<sequence length="295" mass="31790">MTNVTGTERVKRGMAEMQKGGVIMDVINAEQAKIAEEAGAVAVMALERVPADIRAAGGVSRMADPTIVEEVMGAVSIPVMAKCRIGHLVEARVLESLGVDYIDESEVLTPADEVYHLNKRDYTVPFVCGCRDIGEAARRIAEGASMLRTKGEPGTGNIVEAVRHMRQVNAEIRQVASLREDELMTYAKNTGAPYEVLLEIKRLGRLPVVNFAAGGVATPADAALMMQLGADGVFVGSGIFKSENPAKFARAIVEATTHYEDYELIASLSKGLGNAMKGIEISTLLPEQRMQERGW</sequence>
<proteinExistence type="inferred from homology"/>
<reference key="1">
    <citation type="submission" date="2008-10" db="EMBL/GenBank/DDBJ databases">
        <title>Genome sequence of Bacillus cereus AH187.</title>
        <authorList>
            <person name="Dodson R.J."/>
            <person name="Durkin A.S."/>
            <person name="Rosovitz M.J."/>
            <person name="Rasko D.A."/>
            <person name="Kolsto A.B."/>
            <person name="Okstad O.A."/>
            <person name="Ravel J."/>
            <person name="Sutton G."/>
        </authorList>
    </citation>
    <scope>NUCLEOTIDE SEQUENCE [LARGE SCALE GENOMIC DNA]</scope>
    <source>
        <strain>AH187</strain>
    </source>
</reference>
<keyword id="KW-0456">Lyase</keyword>
<keyword id="KW-0663">Pyridoxal phosphate</keyword>
<keyword id="KW-0704">Schiff base</keyword>
<evidence type="ECO:0000255" key="1">
    <source>
        <dbReference type="HAMAP-Rule" id="MF_01824"/>
    </source>
</evidence>
<organism>
    <name type="scientific">Bacillus cereus (strain AH187)</name>
    <dbReference type="NCBI Taxonomy" id="405534"/>
    <lineage>
        <taxon>Bacteria</taxon>
        <taxon>Bacillati</taxon>
        <taxon>Bacillota</taxon>
        <taxon>Bacilli</taxon>
        <taxon>Bacillales</taxon>
        <taxon>Bacillaceae</taxon>
        <taxon>Bacillus</taxon>
        <taxon>Bacillus cereus group</taxon>
    </lineage>
</organism>
<protein>
    <recommendedName>
        <fullName evidence="1">Pyridoxal 5'-phosphate synthase subunit PdxS</fullName>
        <shortName evidence="1">PLP synthase subunit PdxS</shortName>
        <ecNumber evidence="1">4.3.3.6</ecNumber>
    </recommendedName>
    <alternativeName>
        <fullName evidence="1">Pdx1</fullName>
    </alternativeName>
</protein>
<feature type="chain" id="PRO_1000188210" description="Pyridoxal 5'-phosphate synthase subunit PdxS">
    <location>
        <begin position="1"/>
        <end position="295"/>
    </location>
</feature>
<feature type="active site" description="Schiff-base intermediate with D-ribose 5-phosphate" evidence="1">
    <location>
        <position position="82"/>
    </location>
</feature>
<feature type="binding site" evidence="1">
    <location>
        <position position="25"/>
    </location>
    <ligand>
        <name>D-ribose 5-phosphate</name>
        <dbReference type="ChEBI" id="CHEBI:78346"/>
    </ligand>
</feature>
<feature type="binding site" evidence="1">
    <location>
        <position position="154"/>
    </location>
    <ligand>
        <name>D-ribose 5-phosphate</name>
        <dbReference type="ChEBI" id="CHEBI:78346"/>
    </ligand>
</feature>
<feature type="binding site" evidence="1">
    <location>
        <position position="166"/>
    </location>
    <ligand>
        <name>D-glyceraldehyde 3-phosphate</name>
        <dbReference type="ChEBI" id="CHEBI:59776"/>
    </ligand>
</feature>
<feature type="binding site" evidence="1">
    <location>
        <position position="215"/>
    </location>
    <ligand>
        <name>D-ribose 5-phosphate</name>
        <dbReference type="ChEBI" id="CHEBI:78346"/>
    </ligand>
</feature>
<feature type="binding site" evidence="1">
    <location>
        <begin position="236"/>
        <end position="237"/>
    </location>
    <ligand>
        <name>D-ribose 5-phosphate</name>
        <dbReference type="ChEBI" id="CHEBI:78346"/>
    </ligand>
</feature>
<comment type="function">
    <text evidence="1">Catalyzes the formation of pyridoxal 5'-phosphate from ribose 5-phosphate (RBP), glyceraldehyde 3-phosphate (G3P) and ammonia. The ammonia is provided by the PdxT subunit. Can also use ribulose 5-phosphate and dihydroxyacetone phosphate as substrates, resulting from enzyme-catalyzed isomerization of RBP and G3P, respectively.</text>
</comment>
<comment type="catalytic activity">
    <reaction evidence="1">
        <text>aldehydo-D-ribose 5-phosphate + D-glyceraldehyde 3-phosphate + L-glutamine = pyridoxal 5'-phosphate + L-glutamate + phosphate + 3 H2O + H(+)</text>
        <dbReference type="Rhea" id="RHEA:31507"/>
        <dbReference type="ChEBI" id="CHEBI:15377"/>
        <dbReference type="ChEBI" id="CHEBI:15378"/>
        <dbReference type="ChEBI" id="CHEBI:29985"/>
        <dbReference type="ChEBI" id="CHEBI:43474"/>
        <dbReference type="ChEBI" id="CHEBI:58273"/>
        <dbReference type="ChEBI" id="CHEBI:58359"/>
        <dbReference type="ChEBI" id="CHEBI:59776"/>
        <dbReference type="ChEBI" id="CHEBI:597326"/>
        <dbReference type="EC" id="4.3.3.6"/>
    </reaction>
</comment>
<comment type="pathway">
    <text evidence="1">Cofactor biosynthesis; pyridoxal 5'-phosphate biosynthesis.</text>
</comment>
<comment type="subunit">
    <text evidence="1">In the presence of PdxT, forms a dodecamer of heterodimers.</text>
</comment>
<comment type="similarity">
    <text evidence="1">Belongs to the PdxS/SNZ family.</text>
</comment>
<accession>B7HPS6</accession>